<protein>
    <recommendedName>
        <fullName evidence="1">33 kDa chaperonin</fullName>
    </recommendedName>
    <alternativeName>
        <fullName evidence="1">Heat shock protein 33 homolog</fullName>
        <shortName evidence="1">HSP33</shortName>
    </alternativeName>
</protein>
<dbReference type="EMBL" id="CP000687">
    <property type="protein sequence ID" value="ABY69884.1"/>
    <property type="molecule type" value="Genomic_DNA"/>
</dbReference>
<dbReference type="RefSeq" id="WP_012263178.1">
    <property type="nucleotide sequence ID" value="NC_010278.1"/>
</dbReference>
<dbReference type="SMR" id="B0BQP9"/>
<dbReference type="KEGG" id="apj:APJL_1328"/>
<dbReference type="HOGENOM" id="CLU_054493_0_0_6"/>
<dbReference type="Proteomes" id="UP000008547">
    <property type="component" value="Chromosome"/>
</dbReference>
<dbReference type="GO" id="GO:0005737">
    <property type="term" value="C:cytoplasm"/>
    <property type="evidence" value="ECO:0007669"/>
    <property type="project" value="UniProtKB-SubCell"/>
</dbReference>
<dbReference type="GO" id="GO:0044183">
    <property type="term" value="F:protein folding chaperone"/>
    <property type="evidence" value="ECO:0007669"/>
    <property type="project" value="TreeGrafter"/>
</dbReference>
<dbReference type="GO" id="GO:0051082">
    <property type="term" value="F:unfolded protein binding"/>
    <property type="evidence" value="ECO:0007669"/>
    <property type="project" value="UniProtKB-UniRule"/>
</dbReference>
<dbReference type="GO" id="GO:0042026">
    <property type="term" value="P:protein refolding"/>
    <property type="evidence" value="ECO:0007669"/>
    <property type="project" value="TreeGrafter"/>
</dbReference>
<dbReference type="CDD" id="cd00498">
    <property type="entry name" value="Hsp33"/>
    <property type="match status" value="1"/>
</dbReference>
<dbReference type="Gene3D" id="1.10.287.480">
    <property type="entry name" value="helix hairpin bin"/>
    <property type="match status" value="1"/>
</dbReference>
<dbReference type="Gene3D" id="3.55.30.10">
    <property type="entry name" value="Hsp33 domain"/>
    <property type="match status" value="1"/>
</dbReference>
<dbReference type="Gene3D" id="3.90.1280.10">
    <property type="entry name" value="HSP33 redox switch-like"/>
    <property type="match status" value="1"/>
</dbReference>
<dbReference type="HAMAP" id="MF_00117">
    <property type="entry name" value="HslO"/>
    <property type="match status" value="1"/>
</dbReference>
<dbReference type="InterPro" id="IPR000397">
    <property type="entry name" value="Heat_shock_Hsp33"/>
</dbReference>
<dbReference type="InterPro" id="IPR016154">
    <property type="entry name" value="Heat_shock_Hsp33_C"/>
</dbReference>
<dbReference type="InterPro" id="IPR016153">
    <property type="entry name" value="Heat_shock_Hsp33_N"/>
</dbReference>
<dbReference type="InterPro" id="IPR023212">
    <property type="entry name" value="Hsp33_helix_hairpin_bin_dom_sf"/>
</dbReference>
<dbReference type="NCBIfam" id="NF001033">
    <property type="entry name" value="PRK00114.1"/>
    <property type="match status" value="1"/>
</dbReference>
<dbReference type="PANTHER" id="PTHR30111">
    <property type="entry name" value="33 KDA CHAPERONIN"/>
    <property type="match status" value="1"/>
</dbReference>
<dbReference type="PANTHER" id="PTHR30111:SF1">
    <property type="entry name" value="33 KDA CHAPERONIN"/>
    <property type="match status" value="1"/>
</dbReference>
<dbReference type="Pfam" id="PF01430">
    <property type="entry name" value="HSP33"/>
    <property type="match status" value="1"/>
</dbReference>
<dbReference type="PIRSF" id="PIRSF005261">
    <property type="entry name" value="Heat_shock_Hsp33"/>
    <property type="match status" value="1"/>
</dbReference>
<dbReference type="SUPFAM" id="SSF64397">
    <property type="entry name" value="Hsp33 domain"/>
    <property type="match status" value="1"/>
</dbReference>
<dbReference type="SUPFAM" id="SSF118352">
    <property type="entry name" value="HSP33 redox switch-like"/>
    <property type="match status" value="1"/>
</dbReference>
<comment type="function">
    <text evidence="1">Redox regulated molecular chaperone. Protects both thermally unfolding and oxidatively damaged proteins from irreversible aggregation. Plays an important role in the bacterial defense system toward oxidative stress.</text>
</comment>
<comment type="subcellular location">
    <subcellularLocation>
        <location evidence="1">Cytoplasm</location>
    </subcellularLocation>
</comment>
<comment type="PTM">
    <text evidence="1">Under oxidizing conditions two disulfide bonds are formed involving the reactive cysteines. Under reducing conditions zinc is bound to the reactive cysteines and the protein is inactive.</text>
</comment>
<comment type="similarity">
    <text evidence="1">Belongs to the HSP33 family.</text>
</comment>
<keyword id="KW-0143">Chaperone</keyword>
<keyword id="KW-0963">Cytoplasm</keyword>
<keyword id="KW-1015">Disulfide bond</keyword>
<keyword id="KW-0676">Redox-active center</keyword>
<keyword id="KW-0346">Stress response</keyword>
<keyword id="KW-0862">Zinc</keyword>
<name>HSLO_ACTPJ</name>
<proteinExistence type="inferred from homology"/>
<sequence>MSYTKDNDKLYRYLFQNRAVRGEWVRLNDTFTETLNTHQYPKAVQNLLGEMLVATSLLTAIMKFEGTITVQIQGDGPLKLAVVNGNEKQQLRALARTQAEIADNASLSEMIGNGVLVISIMPNDGERYQGVIALDKPTIRECLEDYFIRSEQLQTHLVIRTGEYEGKAVAGGLLLQIMPDSTGTPEDFEHLMTLAETVKDEELFGLEAEELLFRLYHEEQVEVYPPQETEFHCGCSRGRSGNAILLLPMEEIDEMLAEKNGVIDMQCECCGTQYFFDKNAIMEFKQEADKLNQLGL</sequence>
<feature type="chain" id="PRO_1000095007" description="33 kDa chaperonin">
    <location>
        <begin position="1"/>
        <end position="296"/>
    </location>
</feature>
<feature type="disulfide bond" description="Redox-active" evidence="1">
    <location>
        <begin position="233"/>
        <end position="235"/>
    </location>
</feature>
<feature type="disulfide bond" description="Redox-active" evidence="1">
    <location>
        <begin position="267"/>
        <end position="270"/>
    </location>
</feature>
<organism>
    <name type="scientific">Actinobacillus pleuropneumoniae serotype 3 (strain JL03)</name>
    <dbReference type="NCBI Taxonomy" id="434271"/>
    <lineage>
        <taxon>Bacteria</taxon>
        <taxon>Pseudomonadati</taxon>
        <taxon>Pseudomonadota</taxon>
        <taxon>Gammaproteobacteria</taxon>
        <taxon>Pasteurellales</taxon>
        <taxon>Pasteurellaceae</taxon>
        <taxon>Actinobacillus</taxon>
    </lineage>
</organism>
<reference key="1">
    <citation type="journal article" date="2008" name="PLoS ONE">
        <title>Genome biology of Actinobacillus pleuropneumoniae JL03, an isolate of serotype 3 prevalent in China.</title>
        <authorList>
            <person name="Xu Z."/>
            <person name="Zhou Y."/>
            <person name="Li L."/>
            <person name="Zhou R."/>
            <person name="Xiao S."/>
            <person name="Wan Y."/>
            <person name="Zhang S."/>
            <person name="Wang K."/>
            <person name="Li W."/>
            <person name="Li L."/>
            <person name="Jin H."/>
            <person name="Kang M."/>
            <person name="Dalai B."/>
            <person name="Li T."/>
            <person name="Liu L."/>
            <person name="Cheng Y."/>
            <person name="Zhang L."/>
            <person name="Xu T."/>
            <person name="Zheng H."/>
            <person name="Pu S."/>
            <person name="Wang B."/>
            <person name="Gu W."/>
            <person name="Zhang X.L."/>
            <person name="Zhu G.-F."/>
            <person name="Wang S."/>
            <person name="Zhao G.-P."/>
            <person name="Chen H."/>
        </authorList>
    </citation>
    <scope>NUCLEOTIDE SEQUENCE [LARGE SCALE GENOMIC DNA]</scope>
    <source>
        <strain>JL03</strain>
    </source>
</reference>
<evidence type="ECO:0000255" key="1">
    <source>
        <dbReference type="HAMAP-Rule" id="MF_00117"/>
    </source>
</evidence>
<accession>B0BQP9</accession>
<gene>
    <name evidence="1" type="primary">hslO</name>
    <name type="ordered locus">APJL_1328</name>
</gene>